<proteinExistence type="inferred from homology"/>
<comment type="similarity">
    <text evidence="1">Belongs to the bacterial ribosomal protein bL33 family.</text>
</comment>
<dbReference type="EMBL" id="CP000909">
    <property type="protein sequence ID" value="ABY33719.1"/>
    <property type="molecule type" value="Genomic_DNA"/>
</dbReference>
<dbReference type="RefSeq" id="WP_012256375.1">
    <property type="nucleotide sequence ID" value="NC_010175.1"/>
</dbReference>
<dbReference type="RefSeq" id="YP_001634108.1">
    <property type="nucleotide sequence ID" value="NC_010175.1"/>
</dbReference>
<dbReference type="FunCoup" id="A9WE59">
    <property type="interactions" value="188"/>
</dbReference>
<dbReference type="STRING" id="324602.Caur_0470"/>
<dbReference type="EnsemblBacteria" id="ABY33719">
    <property type="protein sequence ID" value="ABY33719"/>
    <property type="gene ID" value="Caur_0470"/>
</dbReference>
<dbReference type="KEGG" id="cau:Caur_0470"/>
<dbReference type="PATRIC" id="fig|324602.8.peg.533"/>
<dbReference type="eggNOG" id="COG0267">
    <property type="taxonomic scope" value="Bacteria"/>
</dbReference>
<dbReference type="HOGENOM" id="CLU_190949_3_0_0"/>
<dbReference type="InParanoid" id="A9WE59"/>
<dbReference type="Proteomes" id="UP000002008">
    <property type="component" value="Chromosome"/>
</dbReference>
<dbReference type="GO" id="GO:0022625">
    <property type="term" value="C:cytosolic large ribosomal subunit"/>
    <property type="evidence" value="ECO:0000318"/>
    <property type="project" value="GO_Central"/>
</dbReference>
<dbReference type="GO" id="GO:0003735">
    <property type="term" value="F:structural constituent of ribosome"/>
    <property type="evidence" value="ECO:0000318"/>
    <property type="project" value="GO_Central"/>
</dbReference>
<dbReference type="GO" id="GO:0006412">
    <property type="term" value="P:translation"/>
    <property type="evidence" value="ECO:0007669"/>
    <property type="project" value="UniProtKB-UniRule"/>
</dbReference>
<dbReference type="FunFam" id="2.20.28.120:FF:000012">
    <property type="entry name" value="50S ribosomal protein L33"/>
    <property type="match status" value="1"/>
</dbReference>
<dbReference type="Gene3D" id="2.20.28.120">
    <property type="entry name" value="Ribosomal protein L33"/>
    <property type="match status" value="1"/>
</dbReference>
<dbReference type="HAMAP" id="MF_00294">
    <property type="entry name" value="Ribosomal_bL33"/>
    <property type="match status" value="1"/>
</dbReference>
<dbReference type="InterPro" id="IPR001705">
    <property type="entry name" value="Ribosomal_bL33"/>
</dbReference>
<dbReference type="InterPro" id="IPR018264">
    <property type="entry name" value="Ribosomal_bL33_CS"/>
</dbReference>
<dbReference type="InterPro" id="IPR038584">
    <property type="entry name" value="Ribosomal_bL33_sf"/>
</dbReference>
<dbReference type="InterPro" id="IPR011332">
    <property type="entry name" value="Ribosomal_zn-bd"/>
</dbReference>
<dbReference type="NCBIfam" id="NF001860">
    <property type="entry name" value="PRK00595.1"/>
    <property type="match status" value="1"/>
</dbReference>
<dbReference type="NCBIfam" id="TIGR01023">
    <property type="entry name" value="rpmG_bact"/>
    <property type="match status" value="1"/>
</dbReference>
<dbReference type="PANTHER" id="PTHR15238">
    <property type="entry name" value="54S RIBOSOMAL PROTEIN L39, MITOCHONDRIAL"/>
    <property type="match status" value="1"/>
</dbReference>
<dbReference type="PANTHER" id="PTHR15238:SF1">
    <property type="entry name" value="LARGE RIBOSOMAL SUBUNIT PROTEIN BL33M"/>
    <property type="match status" value="1"/>
</dbReference>
<dbReference type="Pfam" id="PF00471">
    <property type="entry name" value="Ribosomal_L33"/>
    <property type="match status" value="1"/>
</dbReference>
<dbReference type="SUPFAM" id="SSF57829">
    <property type="entry name" value="Zn-binding ribosomal proteins"/>
    <property type="match status" value="1"/>
</dbReference>
<dbReference type="PROSITE" id="PS00582">
    <property type="entry name" value="RIBOSOMAL_L33"/>
    <property type="match status" value="1"/>
</dbReference>
<name>RL33_CHLAA</name>
<organism>
    <name type="scientific">Chloroflexus aurantiacus (strain ATCC 29366 / DSM 635 / J-10-fl)</name>
    <dbReference type="NCBI Taxonomy" id="324602"/>
    <lineage>
        <taxon>Bacteria</taxon>
        <taxon>Bacillati</taxon>
        <taxon>Chloroflexota</taxon>
        <taxon>Chloroflexia</taxon>
        <taxon>Chloroflexales</taxon>
        <taxon>Chloroflexineae</taxon>
        <taxon>Chloroflexaceae</taxon>
        <taxon>Chloroflexus</taxon>
    </lineage>
</organism>
<sequence length="54" mass="6471">MASKKGNRIVIKLKSTESGHTYTTEKNRRNDPSRLELRKYDPIVRRHVLYRETK</sequence>
<gene>
    <name evidence="1" type="primary">rpmG</name>
    <name type="ordered locus">Caur_0470</name>
</gene>
<protein>
    <recommendedName>
        <fullName evidence="1">Large ribosomal subunit protein bL33</fullName>
    </recommendedName>
    <alternativeName>
        <fullName evidence="2">50S ribosomal protein L33</fullName>
    </alternativeName>
</protein>
<keyword id="KW-1185">Reference proteome</keyword>
<keyword id="KW-0687">Ribonucleoprotein</keyword>
<keyword id="KW-0689">Ribosomal protein</keyword>
<evidence type="ECO:0000255" key="1">
    <source>
        <dbReference type="HAMAP-Rule" id="MF_00294"/>
    </source>
</evidence>
<evidence type="ECO:0000305" key="2"/>
<feature type="chain" id="PRO_1000078908" description="Large ribosomal subunit protein bL33">
    <location>
        <begin position="1"/>
        <end position="54"/>
    </location>
</feature>
<accession>A9WE59</accession>
<reference key="1">
    <citation type="journal article" date="2011" name="BMC Genomics">
        <title>Complete genome sequence of the filamentous anoxygenic phototrophic bacterium Chloroflexus aurantiacus.</title>
        <authorList>
            <person name="Tang K.H."/>
            <person name="Barry K."/>
            <person name="Chertkov O."/>
            <person name="Dalin E."/>
            <person name="Han C.S."/>
            <person name="Hauser L.J."/>
            <person name="Honchak B.M."/>
            <person name="Karbach L.E."/>
            <person name="Land M.L."/>
            <person name="Lapidus A."/>
            <person name="Larimer F.W."/>
            <person name="Mikhailova N."/>
            <person name="Pitluck S."/>
            <person name="Pierson B.K."/>
            <person name="Blankenship R.E."/>
        </authorList>
    </citation>
    <scope>NUCLEOTIDE SEQUENCE [LARGE SCALE GENOMIC DNA]</scope>
    <source>
        <strain>ATCC 29366 / DSM 635 / J-10-fl</strain>
    </source>
</reference>